<evidence type="ECO:0000255" key="1">
    <source>
        <dbReference type="HAMAP-Rule" id="MF_01331"/>
    </source>
</evidence>
<evidence type="ECO:0000305" key="2"/>
<feature type="chain" id="PRO_1000214606" description="Large ribosomal subunit protein uL22">
    <location>
        <begin position="1"/>
        <end position="111"/>
    </location>
</feature>
<organism>
    <name type="scientific">Geobacter sp. (strain M21)</name>
    <dbReference type="NCBI Taxonomy" id="443144"/>
    <lineage>
        <taxon>Bacteria</taxon>
        <taxon>Pseudomonadati</taxon>
        <taxon>Thermodesulfobacteriota</taxon>
        <taxon>Desulfuromonadia</taxon>
        <taxon>Geobacterales</taxon>
        <taxon>Geobacteraceae</taxon>
        <taxon>Geobacter</taxon>
    </lineage>
</organism>
<proteinExistence type="inferred from homology"/>
<keyword id="KW-0687">Ribonucleoprotein</keyword>
<keyword id="KW-0689">Ribosomal protein</keyword>
<keyword id="KW-0694">RNA-binding</keyword>
<keyword id="KW-0699">rRNA-binding</keyword>
<accession>C6E4Q2</accession>
<protein>
    <recommendedName>
        <fullName evidence="1">Large ribosomal subunit protein uL22</fullName>
    </recommendedName>
    <alternativeName>
        <fullName evidence="2">50S ribosomal protein L22</fullName>
    </alternativeName>
</protein>
<comment type="function">
    <text evidence="1">This protein binds specifically to 23S rRNA; its binding is stimulated by other ribosomal proteins, e.g. L4, L17, and L20. It is important during the early stages of 50S assembly. It makes multiple contacts with different domains of the 23S rRNA in the assembled 50S subunit and ribosome (By similarity).</text>
</comment>
<comment type="function">
    <text evidence="1">The globular domain of the protein is located near the polypeptide exit tunnel on the outside of the subunit, while an extended beta-hairpin is found that lines the wall of the exit tunnel in the center of the 70S ribosome.</text>
</comment>
<comment type="subunit">
    <text evidence="1">Part of the 50S ribosomal subunit.</text>
</comment>
<comment type="similarity">
    <text evidence="1">Belongs to the universal ribosomal protein uL22 family.</text>
</comment>
<reference key="1">
    <citation type="submission" date="2009-07" db="EMBL/GenBank/DDBJ databases">
        <title>Complete sequence of Geobacter sp. M21.</title>
        <authorList>
            <consortium name="US DOE Joint Genome Institute"/>
            <person name="Lucas S."/>
            <person name="Copeland A."/>
            <person name="Lapidus A."/>
            <person name="Glavina del Rio T."/>
            <person name="Dalin E."/>
            <person name="Tice H."/>
            <person name="Bruce D."/>
            <person name="Goodwin L."/>
            <person name="Pitluck S."/>
            <person name="Saunders E."/>
            <person name="Brettin T."/>
            <person name="Detter J.C."/>
            <person name="Han C."/>
            <person name="Larimer F."/>
            <person name="Land M."/>
            <person name="Hauser L."/>
            <person name="Kyrpides N."/>
            <person name="Ovchinnikova G."/>
            <person name="Lovley D."/>
        </authorList>
    </citation>
    <scope>NUCLEOTIDE SEQUENCE [LARGE SCALE GENOMIC DNA]</scope>
    <source>
        <strain>M21</strain>
    </source>
</reference>
<gene>
    <name evidence="1" type="primary">rplV</name>
    <name type="ordered locus">GM21_3323</name>
</gene>
<dbReference type="EMBL" id="CP001661">
    <property type="protein sequence ID" value="ACT19348.1"/>
    <property type="molecule type" value="Genomic_DNA"/>
</dbReference>
<dbReference type="SMR" id="C6E4Q2"/>
<dbReference type="STRING" id="443144.GM21_3323"/>
<dbReference type="KEGG" id="gem:GM21_3323"/>
<dbReference type="eggNOG" id="COG0091">
    <property type="taxonomic scope" value="Bacteria"/>
</dbReference>
<dbReference type="HOGENOM" id="CLU_083987_3_3_7"/>
<dbReference type="OrthoDB" id="9805969at2"/>
<dbReference type="GO" id="GO:0022625">
    <property type="term" value="C:cytosolic large ribosomal subunit"/>
    <property type="evidence" value="ECO:0007669"/>
    <property type="project" value="TreeGrafter"/>
</dbReference>
<dbReference type="GO" id="GO:0019843">
    <property type="term" value="F:rRNA binding"/>
    <property type="evidence" value="ECO:0007669"/>
    <property type="project" value="UniProtKB-UniRule"/>
</dbReference>
<dbReference type="GO" id="GO:0003735">
    <property type="term" value="F:structural constituent of ribosome"/>
    <property type="evidence" value="ECO:0007669"/>
    <property type="project" value="InterPro"/>
</dbReference>
<dbReference type="GO" id="GO:0006412">
    <property type="term" value="P:translation"/>
    <property type="evidence" value="ECO:0007669"/>
    <property type="project" value="UniProtKB-UniRule"/>
</dbReference>
<dbReference type="CDD" id="cd00336">
    <property type="entry name" value="Ribosomal_L22"/>
    <property type="match status" value="1"/>
</dbReference>
<dbReference type="Gene3D" id="3.90.470.10">
    <property type="entry name" value="Ribosomal protein L22/L17"/>
    <property type="match status" value="1"/>
</dbReference>
<dbReference type="HAMAP" id="MF_01331_B">
    <property type="entry name" value="Ribosomal_uL22_B"/>
    <property type="match status" value="1"/>
</dbReference>
<dbReference type="InterPro" id="IPR001063">
    <property type="entry name" value="Ribosomal_uL22"/>
</dbReference>
<dbReference type="InterPro" id="IPR005727">
    <property type="entry name" value="Ribosomal_uL22_bac/chlpt-type"/>
</dbReference>
<dbReference type="InterPro" id="IPR047867">
    <property type="entry name" value="Ribosomal_uL22_bac/org-type"/>
</dbReference>
<dbReference type="InterPro" id="IPR018260">
    <property type="entry name" value="Ribosomal_uL22_CS"/>
</dbReference>
<dbReference type="InterPro" id="IPR036394">
    <property type="entry name" value="Ribosomal_uL22_sf"/>
</dbReference>
<dbReference type="NCBIfam" id="TIGR01044">
    <property type="entry name" value="rplV_bact"/>
    <property type="match status" value="1"/>
</dbReference>
<dbReference type="PANTHER" id="PTHR13501">
    <property type="entry name" value="CHLOROPLAST 50S RIBOSOMAL PROTEIN L22-RELATED"/>
    <property type="match status" value="1"/>
</dbReference>
<dbReference type="PANTHER" id="PTHR13501:SF8">
    <property type="entry name" value="LARGE RIBOSOMAL SUBUNIT PROTEIN UL22M"/>
    <property type="match status" value="1"/>
</dbReference>
<dbReference type="Pfam" id="PF00237">
    <property type="entry name" value="Ribosomal_L22"/>
    <property type="match status" value="1"/>
</dbReference>
<dbReference type="SUPFAM" id="SSF54843">
    <property type="entry name" value="Ribosomal protein L22"/>
    <property type="match status" value="1"/>
</dbReference>
<dbReference type="PROSITE" id="PS00464">
    <property type="entry name" value="RIBOSOMAL_L22"/>
    <property type="match status" value="1"/>
</dbReference>
<name>RL22_GEOSM</name>
<sequence>MESSAKLSSVRLSPRKTRLVVDLVRGKGIQTALNTLRFSPQPSAKLISKLLSSAVANAEQKGCSDVDKLFVKTIFVDGGAVLKRFTPRAMGRASKIRKPTSHITVVLAEKK</sequence>